<proteinExistence type="inferred from homology"/>
<name>ATPE_SYNS9</name>
<gene>
    <name evidence="1" type="primary">atpC</name>
    <name type="ordered locus">Syncc9902_0503</name>
</gene>
<dbReference type="EMBL" id="CP000097">
    <property type="protein sequence ID" value="ABB25471.1"/>
    <property type="molecule type" value="Genomic_DNA"/>
</dbReference>
<dbReference type="RefSeq" id="WP_011359320.1">
    <property type="nucleotide sequence ID" value="NC_007513.1"/>
</dbReference>
<dbReference type="SMR" id="Q3AZK6"/>
<dbReference type="STRING" id="316279.Syncc9902_0503"/>
<dbReference type="KEGG" id="sye:Syncc9902_0503"/>
<dbReference type="eggNOG" id="COG0355">
    <property type="taxonomic scope" value="Bacteria"/>
</dbReference>
<dbReference type="HOGENOM" id="CLU_084338_1_2_3"/>
<dbReference type="OrthoDB" id="9804110at2"/>
<dbReference type="Proteomes" id="UP000002712">
    <property type="component" value="Chromosome"/>
</dbReference>
<dbReference type="GO" id="GO:0031676">
    <property type="term" value="C:plasma membrane-derived thylakoid membrane"/>
    <property type="evidence" value="ECO:0007669"/>
    <property type="project" value="UniProtKB-SubCell"/>
</dbReference>
<dbReference type="GO" id="GO:0045259">
    <property type="term" value="C:proton-transporting ATP synthase complex"/>
    <property type="evidence" value="ECO:0007669"/>
    <property type="project" value="UniProtKB-KW"/>
</dbReference>
<dbReference type="GO" id="GO:0005524">
    <property type="term" value="F:ATP binding"/>
    <property type="evidence" value="ECO:0007669"/>
    <property type="project" value="UniProtKB-UniRule"/>
</dbReference>
<dbReference type="GO" id="GO:0046933">
    <property type="term" value="F:proton-transporting ATP synthase activity, rotational mechanism"/>
    <property type="evidence" value="ECO:0007669"/>
    <property type="project" value="UniProtKB-UniRule"/>
</dbReference>
<dbReference type="CDD" id="cd12152">
    <property type="entry name" value="F1-ATPase_delta"/>
    <property type="match status" value="1"/>
</dbReference>
<dbReference type="Gene3D" id="2.60.15.10">
    <property type="entry name" value="F0F1 ATP synthase delta/epsilon subunit, N-terminal"/>
    <property type="match status" value="1"/>
</dbReference>
<dbReference type="Gene3D" id="1.10.287.540">
    <property type="entry name" value="Helix hairpin bin"/>
    <property type="match status" value="1"/>
</dbReference>
<dbReference type="HAMAP" id="MF_00530">
    <property type="entry name" value="ATP_synth_epsil_bac"/>
    <property type="match status" value="1"/>
</dbReference>
<dbReference type="InterPro" id="IPR001469">
    <property type="entry name" value="ATP_synth_F1_dsu/esu"/>
</dbReference>
<dbReference type="InterPro" id="IPR020546">
    <property type="entry name" value="ATP_synth_F1_dsu/esu_N"/>
</dbReference>
<dbReference type="InterPro" id="IPR020547">
    <property type="entry name" value="ATP_synth_F1_esu_C"/>
</dbReference>
<dbReference type="InterPro" id="IPR036771">
    <property type="entry name" value="ATPsynth_dsu/esu_N"/>
</dbReference>
<dbReference type="NCBIfam" id="TIGR01216">
    <property type="entry name" value="ATP_synt_epsi"/>
    <property type="match status" value="1"/>
</dbReference>
<dbReference type="PANTHER" id="PTHR13822">
    <property type="entry name" value="ATP SYNTHASE DELTA/EPSILON CHAIN"/>
    <property type="match status" value="1"/>
</dbReference>
<dbReference type="PANTHER" id="PTHR13822:SF10">
    <property type="entry name" value="ATP SYNTHASE EPSILON CHAIN, CHLOROPLASTIC"/>
    <property type="match status" value="1"/>
</dbReference>
<dbReference type="Pfam" id="PF00401">
    <property type="entry name" value="ATP-synt_DE"/>
    <property type="match status" value="1"/>
</dbReference>
<dbReference type="Pfam" id="PF02823">
    <property type="entry name" value="ATP-synt_DE_N"/>
    <property type="match status" value="1"/>
</dbReference>
<dbReference type="SUPFAM" id="SSF51344">
    <property type="entry name" value="Epsilon subunit of F1F0-ATP synthase N-terminal domain"/>
    <property type="match status" value="1"/>
</dbReference>
<sequence length="136" mass="14157">MSLTLRVLAPDQNVFDGSADEVILPSTTGQLGILTGHISMLTAIDVGVLRVRANGSWNSIALMGGFAEVDSDEVTVLVNKAELGSSIDANAAEADFQKATTAVAGMEGQPASPEKVKAQQQLNEARARMQASKSAD</sequence>
<protein>
    <recommendedName>
        <fullName evidence="1">ATP synthase epsilon chain</fullName>
    </recommendedName>
    <alternativeName>
        <fullName evidence="1">ATP synthase F1 sector epsilon subunit</fullName>
    </alternativeName>
    <alternativeName>
        <fullName evidence="1">F-ATPase epsilon subunit</fullName>
    </alternativeName>
</protein>
<evidence type="ECO:0000255" key="1">
    <source>
        <dbReference type="HAMAP-Rule" id="MF_00530"/>
    </source>
</evidence>
<evidence type="ECO:0000256" key="2">
    <source>
        <dbReference type="SAM" id="MobiDB-lite"/>
    </source>
</evidence>
<feature type="chain" id="PRO_0000265911" description="ATP synthase epsilon chain">
    <location>
        <begin position="1"/>
        <end position="136"/>
    </location>
</feature>
<feature type="region of interest" description="Disordered" evidence="2">
    <location>
        <begin position="104"/>
        <end position="136"/>
    </location>
</feature>
<organism>
    <name type="scientific">Synechococcus sp. (strain CC9902)</name>
    <dbReference type="NCBI Taxonomy" id="316279"/>
    <lineage>
        <taxon>Bacteria</taxon>
        <taxon>Bacillati</taxon>
        <taxon>Cyanobacteriota</taxon>
        <taxon>Cyanophyceae</taxon>
        <taxon>Synechococcales</taxon>
        <taxon>Synechococcaceae</taxon>
        <taxon>Synechococcus</taxon>
    </lineage>
</organism>
<comment type="function">
    <text evidence="1">Produces ATP from ADP in the presence of a proton gradient across the membrane.</text>
</comment>
<comment type="subunit">
    <text>F-type ATPases have 2 components, CF(1) - the catalytic core - and CF(0) - the membrane proton channel. CF(1) has five subunits: alpha(3), beta(3), gamma(1), delta(1), epsilon(1). CF(0) has three main subunits: a, b and c.</text>
</comment>
<comment type="subcellular location">
    <subcellularLocation>
        <location evidence="1">Cellular thylakoid membrane</location>
        <topology evidence="1">Peripheral membrane protein</topology>
    </subcellularLocation>
</comment>
<comment type="similarity">
    <text evidence="1">Belongs to the ATPase epsilon chain family.</text>
</comment>
<reference key="1">
    <citation type="submission" date="2005-08" db="EMBL/GenBank/DDBJ databases">
        <title>Complete sequence of Synechococcus sp. CC9902.</title>
        <authorList>
            <person name="Copeland A."/>
            <person name="Lucas S."/>
            <person name="Lapidus A."/>
            <person name="Barry K."/>
            <person name="Detter J.C."/>
            <person name="Glavina T."/>
            <person name="Hammon N."/>
            <person name="Israni S."/>
            <person name="Pitluck S."/>
            <person name="Martinez M."/>
            <person name="Schmutz J."/>
            <person name="Larimer F."/>
            <person name="Land M."/>
            <person name="Kyrpides N."/>
            <person name="Ivanova N."/>
            <person name="Richardson P."/>
        </authorList>
    </citation>
    <scope>NUCLEOTIDE SEQUENCE [LARGE SCALE GENOMIC DNA]</scope>
    <source>
        <strain>CC9902</strain>
    </source>
</reference>
<accession>Q3AZK6</accession>
<keyword id="KW-0066">ATP synthesis</keyword>
<keyword id="KW-0139">CF(1)</keyword>
<keyword id="KW-0375">Hydrogen ion transport</keyword>
<keyword id="KW-0406">Ion transport</keyword>
<keyword id="KW-0472">Membrane</keyword>
<keyword id="KW-1185">Reference proteome</keyword>
<keyword id="KW-0793">Thylakoid</keyword>
<keyword id="KW-0813">Transport</keyword>